<feature type="chain" id="PRO_0000249032" description="UPF0382 membrane protein SAS0541">
    <location>
        <begin position="1"/>
        <end position="122"/>
    </location>
</feature>
<feature type="transmembrane region" description="Helical" evidence="1">
    <location>
        <begin position="3"/>
        <end position="23"/>
    </location>
</feature>
<feature type="transmembrane region" description="Helical" evidence="1">
    <location>
        <begin position="46"/>
        <end position="66"/>
    </location>
</feature>
<feature type="transmembrane region" description="Helical" evidence="1">
    <location>
        <begin position="69"/>
        <end position="89"/>
    </location>
</feature>
<feature type="transmembrane region" description="Helical" evidence="1">
    <location>
        <begin position="98"/>
        <end position="118"/>
    </location>
</feature>
<sequence>MKLFIILGALNAMMAVGTGAFGAHGLQGKISDHYLSVWEKATTYQMYHGLALLIIGVISGTTSINVNWAGWLIFAGIIFFSGSLYILVLTQIKVLGAITPIGGVLFIIGWIMLIIATFKFAG</sequence>
<name>Y541_STAAS</name>
<reference key="1">
    <citation type="journal article" date="2004" name="Proc. Natl. Acad. Sci. U.S.A.">
        <title>Complete genomes of two clinical Staphylococcus aureus strains: evidence for the rapid evolution of virulence and drug resistance.</title>
        <authorList>
            <person name="Holden M.T.G."/>
            <person name="Feil E.J."/>
            <person name="Lindsay J.A."/>
            <person name="Peacock S.J."/>
            <person name="Day N.P.J."/>
            <person name="Enright M.C."/>
            <person name="Foster T.J."/>
            <person name="Moore C.E."/>
            <person name="Hurst L."/>
            <person name="Atkin R."/>
            <person name="Barron A."/>
            <person name="Bason N."/>
            <person name="Bentley S.D."/>
            <person name="Chillingworth C."/>
            <person name="Chillingworth T."/>
            <person name="Churcher C."/>
            <person name="Clark L."/>
            <person name="Corton C."/>
            <person name="Cronin A."/>
            <person name="Doggett J."/>
            <person name="Dowd L."/>
            <person name="Feltwell T."/>
            <person name="Hance Z."/>
            <person name="Harris B."/>
            <person name="Hauser H."/>
            <person name="Holroyd S."/>
            <person name="Jagels K."/>
            <person name="James K.D."/>
            <person name="Lennard N."/>
            <person name="Line A."/>
            <person name="Mayes R."/>
            <person name="Moule S."/>
            <person name="Mungall K."/>
            <person name="Ormond D."/>
            <person name="Quail M.A."/>
            <person name="Rabbinowitsch E."/>
            <person name="Rutherford K.M."/>
            <person name="Sanders M."/>
            <person name="Sharp S."/>
            <person name="Simmonds M."/>
            <person name="Stevens K."/>
            <person name="Whitehead S."/>
            <person name="Barrell B.G."/>
            <person name="Spratt B.G."/>
            <person name="Parkhill J."/>
        </authorList>
    </citation>
    <scope>NUCLEOTIDE SEQUENCE [LARGE SCALE GENOMIC DNA]</scope>
    <source>
        <strain>MSSA476</strain>
    </source>
</reference>
<proteinExistence type="inferred from homology"/>
<gene>
    <name type="ordered locus">SAS0541</name>
</gene>
<dbReference type="EMBL" id="BX571857">
    <property type="protein sequence ID" value="CAG42316.1"/>
    <property type="molecule type" value="Genomic_DNA"/>
</dbReference>
<dbReference type="RefSeq" id="WP_000765183.1">
    <property type="nucleotide sequence ID" value="NC_002953.3"/>
</dbReference>
<dbReference type="KEGG" id="sas:SAS0541"/>
<dbReference type="HOGENOM" id="CLU_096548_3_3_9"/>
<dbReference type="GO" id="GO:0005886">
    <property type="term" value="C:plasma membrane"/>
    <property type="evidence" value="ECO:0007669"/>
    <property type="project" value="UniProtKB-SubCell"/>
</dbReference>
<dbReference type="InterPro" id="IPR006696">
    <property type="entry name" value="DUF423"/>
</dbReference>
<dbReference type="PANTHER" id="PTHR43461">
    <property type="entry name" value="TRANSMEMBRANE PROTEIN 256"/>
    <property type="match status" value="1"/>
</dbReference>
<dbReference type="PANTHER" id="PTHR43461:SF1">
    <property type="entry name" value="TRANSMEMBRANE PROTEIN 256"/>
    <property type="match status" value="1"/>
</dbReference>
<dbReference type="Pfam" id="PF04241">
    <property type="entry name" value="DUF423"/>
    <property type="match status" value="1"/>
</dbReference>
<organism>
    <name type="scientific">Staphylococcus aureus (strain MSSA476)</name>
    <dbReference type="NCBI Taxonomy" id="282459"/>
    <lineage>
        <taxon>Bacteria</taxon>
        <taxon>Bacillati</taxon>
        <taxon>Bacillota</taxon>
        <taxon>Bacilli</taxon>
        <taxon>Bacillales</taxon>
        <taxon>Staphylococcaceae</taxon>
        <taxon>Staphylococcus</taxon>
    </lineage>
</organism>
<keyword id="KW-1003">Cell membrane</keyword>
<keyword id="KW-0472">Membrane</keyword>
<keyword id="KW-0812">Transmembrane</keyword>
<keyword id="KW-1133">Transmembrane helix</keyword>
<protein>
    <recommendedName>
        <fullName>UPF0382 membrane protein SAS0541</fullName>
    </recommendedName>
</protein>
<comment type="subcellular location">
    <subcellularLocation>
        <location evidence="2">Cell membrane</location>
        <topology evidence="2">Multi-pass membrane protein</topology>
    </subcellularLocation>
</comment>
<comment type="similarity">
    <text evidence="2">Belongs to the UPF0382 family.</text>
</comment>
<evidence type="ECO:0000255" key="1"/>
<evidence type="ECO:0000305" key="2"/>
<accession>Q6GBQ4</accession>